<accession>B9JZF4</accession>
<protein>
    <recommendedName>
        <fullName evidence="1">Ubiquinone/menaquinone biosynthesis C-methyltransferase UbiE</fullName>
        <ecNumber evidence="1">2.1.1.163</ecNumber>
        <ecNumber evidence="1">2.1.1.201</ecNumber>
    </recommendedName>
    <alternativeName>
        <fullName evidence="1">2-methoxy-6-polyprenyl-1,4-benzoquinol methylase</fullName>
    </alternativeName>
    <alternativeName>
        <fullName evidence="1">Demethylmenaquinone methyltransferase</fullName>
    </alternativeName>
</protein>
<evidence type="ECO:0000255" key="1">
    <source>
        <dbReference type="HAMAP-Rule" id="MF_01813"/>
    </source>
</evidence>
<comment type="function">
    <text evidence="1">Methyltransferase required for the conversion of demethylmenaquinol (DMKH2) to menaquinol (MKH2) and the conversion of 2-polyprenyl-6-methoxy-1,4-benzoquinol (DDMQH2) to 2-polyprenyl-3-methyl-6-methoxy-1,4-benzoquinol (DMQH2).</text>
</comment>
<comment type="catalytic activity">
    <reaction evidence="1">
        <text>a 2-demethylmenaquinol + S-adenosyl-L-methionine = a menaquinol + S-adenosyl-L-homocysteine + H(+)</text>
        <dbReference type="Rhea" id="RHEA:42640"/>
        <dbReference type="Rhea" id="RHEA-COMP:9539"/>
        <dbReference type="Rhea" id="RHEA-COMP:9563"/>
        <dbReference type="ChEBI" id="CHEBI:15378"/>
        <dbReference type="ChEBI" id="CHEBI:18151"/>
        <dbReference type="ChEBI" id="CHEBI:55437"/>
        <dbReference type="ChEBI" id="CHEBI:57856"/>
        <dbReference type="ChEBI" id="CHEBI:59789"/>
        <dbReference type="EC" id="2.1.1.163"/>
    </reaction>
</comment>
<comment type="catalytic activity">
    <reaction evidence="1">
        <text>a 2-methoxy-6-(all-trans-polyprenyl)benzene-1,4-diol + S-adenosyl-L-methionine = a 5-methoxy-2-methyl-3-(all-trans-polyprenyl)benzene-1,4-diol + S-adenosyl-L-homocysteine + H(+)</text>
        <dbReference type="Rhea" id="RHEA:28286"/>
        <dbReference type="Rhea" id="RHEA-COMP:10858"/>
        <dbReference type="Rhea" id="RHEA-COMP:10859"/>
        <dbReference type="ChEBI" id="CHEBI:15378"/>
        <dbReference type="ChEBI" id="CHEBI:57856"/>
        <dbReference type="ChEBI" id="CHEBI:59789"/>
        <dbReference type="ChEBI" id="CHEBI:84166"/>
        <dbReference type="ChEBI" id="CHEBI:84167"/>
        <dbReference type="EC" id="2.1.1.201"/>
    </reaction>
</comment>
<comment type="pathway">
    <text evidence="1">Quinol/quinone metabolism; menaquinone biosynthesis; menaquinol from 1,4-dihydroxy-2-naphthoate: step 2/2.</text>
</comment>
<comment type="pathway">
    <text evidence="1">Cofactor biosynthesis; ubiquinone biosynthesis.</text>
</comment>
<comment type="similarity">
    <text evidence="1">Belongs to the class I-like SAM-binding methyltransferase superfamily. MenG/UbiE family.</text>
</comment>
<reference key="1">
    <citation type="journal article" date="2009" name="J. Bacteriol.">
        <title>Genome sequences of three Agrobacterium biovars help elucidate the evolution of multichromosome genomes in bacteria.</title>
        <authorList>
            <person name="Slater S.C."/>
            <person name="Goldman B.S."/>
            <person name="Goodner B."/>
            <person name="Setubal J.C."/>
            <person name="Farrand S.K."/>
            <person name="Nester E.W."/>
            <person name="Burr T.J."/>
            <person name="Banta L."/>
            <person name="Dickerman A.W."/>
            <person name="Paulsen I."/>
            <person name="Otten L."/>
            <person name="Suen G."/>
            <person name="Welch R."/>
            <person name="Almeida N.F."/>
            <person name="Arnold F."/>
            <person name="Burton O.T."/>
            <person name="Du Z."/>
            <person name="Ewing A."/>
            <person name="Godsy E."/>
            <person name="Heisel S."/>
            <person name="Houmiel K.L."/>
            <person name="Jhaveri J."/>
            <person name="Lu J."/>
            <person name="Miller N.M."/>
            <person name="Norton S."/>
            <person name="Chen Q."/>
            <person name="Phoolcharoen W."/>
            <person name="Ohlin V."/>
            <person name="Ondrusek D."/>
            <person name="Pride N."/>
            <person name="Stricklin S.L."/>
            <person name="Sun J."/>
            <person name="Wheeler C."/>
            <person name="Wilson L."/>
            <person name="Zhu H."/>
            <person name="Wood D.W."/>
        </authorList>
    </citation>
    <scope>NUCLEOTIDE SEQUENCE [LARGE SCALE GENOMIC DNA]</scope>
    <source>
        <strain>ATCC BAA-846 / DSM 112012 / S4</strain>
    </source>
</reference>
<feature type="chain" id="PRO_1000187723" description="Ubiquinone/menaquinone biosynthesis C-methyltransferase UbiE">
    <location>
        <begin position="1"/>
        <end position="258"/>
    </location>
</feature>
<feature type="binding site" evidence="1">
    <location>
        <position position="81"/>
    </location>
    <ligand>
        <name>S-adenosyl-L-methionine</name>
        <dbReference type="ChEBI" id="CHEBI:59789"/>
    </ligand>
</feature>
<feature type="binding site" evidence="1">
    <location>
        <position position="102"/>
    </location>
    <ligand>
        <name>S-adenosyl-L-methionine</name>
        <dbReference type="ChEBI" id="CHEBI:59789"/>
    </ligand>
</feature>
<feature type="binding site" evidence="1">
    <location>
        <begin position="130"/>
        <end position="131"/>
    </location>
    <ligand>
        <name>S-adenosyl-L-methionine</name>
        <dbReference type="ChEBI" id="CHEBI:59789"/>
    </ligand>
</feature>
<organism>
    <name type="scientific">Allorhizobium ampelinum (strain ATCC BAA-846 / DSM 112012 / S4)</name>
    <name type="common">Agrobacterium vitis (strain S4)</name>
    <dbReference type="NCBI Taxonomy" id="311402"/>
    <lineage>
        <taxon>Bacteria</taxon>
        <taxon>Pseudomonadati</taxon>
        <taxon>Pseudomonadota</taxon>
        <taxon>Alphaproteobacteria</taxon>
        <taxon>Hyphomicrobiales</taxon>
        <taxon>Rhizobiaceae</taxon>
        <taxon>Rhizobium/Agrobacterium group</taxon>
        <taxon>Allorhizobium</taxon>
        <taxon>Allorhizobium ampelinum</taxon>
    </lineage>
</organism>
<keyword id="KW-0474">Menaquinone biosynthesis</keyword>
<keyword id="KW-0489">Methyltransferase</keyword>
<keyword id="KW-1185">Reference proteome</keyword>
<keyword id="KW-0949">S-adenosyl-L-methionine</keyword>
<keyword id="KW-0808">Transferase</keyword>
<keyword id="KW-0831">Ubiquinone biosynthesis</keyword>
<dbReference type="EC" id="2.1.1.163" evidence="1"/>
<dbReference type="EC" id="2.1.1.201" evidence="1"/>
<dbReference type="EMBL" id="CP000633">
    <property type="protein sequence ID" value="ACM35266.1"/>
    <property type="molecule type" value="Genomic_DNA"/>
</dbReference>
<dbReference type="RefSeq" id="WP_012654796.1">
    <property type="nucleotide sequence ID" value="NC_011989.1"/>
</dbReference>
<dbReference type="SMR" id="B9JZF4"/>
<dbReference type="STRING" id="311402.Avi_0388"/>
<dbReference type="KEGG" id="avi:Avi_0388"/>
<dbReference type="eggNOG" id="COG2226">
    <property type="taxonomic scope" value="Bacteria"/>
</dbReference>
<dbReference type="HOGENOM" id="CLU_037990_0_1_5"/>
<dbReference type="UniPathway" id="UPA00079">
    <property type="reaction ID" value="UER00169"/>
</dbReference>
<dbReference type="UniPathway" id="UPA00232"/>
<dbReference type="Proteomes" id="UP000001596">
    <property type="component" value="Chromosome 1"/>
</dbReference>
<dbReference type="GO" id="GO:0008425">
    <property type="term" value="F:2-methoxy-6-polyprenyl-1,4-benzoquinol methyltransferase activity"/>
    <property type="evidence" value="ECO:0007669"/>
    <property type="project" value="UniProtKB-UniRule"/>
</dbReference>
<dbReference type="GO" id="GO:0043770">
    <property type="term" value="F:demethylmenaquinone methyltransferase activity"/>
    <property type="evidence" value="ECO:0007669"/>
    <property type="project" value="UniProtKB-UniRule"/>
</dbReference>
<dbReference type="GO" id="GO:0009060">
    <property type="term" value="P:aerobic respiration"/>
    <property type="evidence" value="ECO:0007669"/>
    <property type="project" value="UniProtKB-UniRule"/>
</dbReference>
<dbReference type="GO" id="GO:0009234">
    <property type="term" value="P:menaquinone biosynthetic process"/>
    <property type="evidence" value="ECO:0007669"/>
    <property type="project" value="UniProtKB-UniRule"/>
</dbReference>
<dbReference type="GO" id="GO:0032259">
    <property type="term" value="P:methylation"/>
    <property type="evidence" value="ECO:0007669"/>
    <property type="project" value="UniProtKB-KW"/>
</dbReference>
<dbReference type="CDD" id="cd02440">
    <property type="entry name" value="AdoMet_MTases"/>
    <property type="match status" value="1"/>
</dbReference>
<dbReference type="Gene3D" id="3.40.50.150">
    <property type="entry name" value="Vaccinia Virus protein VP39"/>
    <property type="match status" value="1"/>
</dbReference>
<dbReference type="HAMAP" id="MF_01813">
    <property type="entry name" value="MenG_UbiE_methyltr"/>
    <property type="match status" value="1"/>
</dbReference>
<dbReference type="InterPro" id="IPR029063">
    <property type="entry name" value="SAM-dependent_MTases_sf"/>
</dbReference>
<dbReference type="InterPro" id="IPR004033">
    <property type="entry name" value="UbiE/COQ5_MeTrFase"/>
</dbReference>
<dbReference type="InterPro" id="IPR023576">
    <property type="entry name" value="UbiE/COQ5_MeTrFase_CS"/>
</dbReference>
<dbReference type="NCBIfam" id="TIGR01934">
    <property type="entry name" value="MenG_MenH_UbiE"/>
    <property type="match status" value="1"/>
</dbReference>
<dbReference type="NCBIfam" id="NF001242">
    <property type="entry name" value="PRK00216.1-3"/>
    <property type="match status" value="1"/>
</dbReference>
<dbReference type="NCBIfam" id="NF001244">
    <property type="entry name" value="PRK00216.1-5"/>
    <property type="match status" value="1"/>
</dbReference>
<dbReference type="PANTHER" id="PTHR43591:SF24">
    <property type="entry name" value="2-METHOXY-6-POLYPRENYL-1,4-BENZOQUINOL METHYLASE, MITOCHONDRIAL"/>
    <property type="match status" value="1"/>
</dbReference>
<dbReference type="PANTHER" id="PTHR43591">
    <property type="entry name" value="METHYLTRANSFERASE"/>
    <property type="match status" value="1"/>
</dbReference>
<dbReference type="Pfam" id="PF01209">
    <property type="entry name" value="Ubie_methyltran"/>
    <property type="match status" value="1"/>
</dbReference>
<dbReference type="SUPFAM" id="SSF53335">
    <property type="entry name" value="S-adenosyl-L-methionine-dependent methyltransferases"/>
    <property type="match status" value="1"/>
</dbReference>
<dbReference type="PROSITE" id="PS51608">
    <property type="entry name" value="SAM_MT_UBIE"/>
    <property type="match status" value="1"/>
</dbReference>
<dbReference type="PROSITE" id="PS01183">
    <property type="entry name" value="UBIE_1"/>
    <property type="match status" value="1"/>
</dbReference>
<dbReference type="PROSITE" id="PS01184">
    <property type="entry name" value="UBIE_2"/>
    <property type="match status" value="1"/>
</dbReference>
<gene>
    <name evidence="1" type="primary">ubiE</name>
    <name type="ordered locus">Avi_0388</name>
</gene>
<proteinExistence type="inferred from homology"/>
<sequence length="258" mass="28589">MVASRTSADGGMETSYGFRDVAEGEKQGLVNDVFHKVAKRYDIMNDVMSAGMHRVWKDALIAALNPRKDAGYKVLDVAGGTGDIAFRIIEASRRLAHATVLDINGSMLGVGQERAQKKGLSDNLTFVEANAEALPFEANQFDAYTIAFGIRNVPRIDVALSEAYRVLKRGGRLLVLEFSEVQMPLLDRFYDQWSFKAIPRFGKMITGEAEPYQYLVESIRKFPNQQDFAAMITKAGFSKVSFTNYTGGIAALHSGWKI</sequence>
<name>UBIE_ALLAM</name>